<dbReference type="EC" id="2.7.8.13" evidence="1"/>
<dbReference type="EMBL" id="CP001600">
    <property type="protein sequence ID" value="ACR67954.1"/>
    <property type="molecule type" value="Genomic_DNA"/>
</dbReference>
<dbReference type="RefSeq" id="WP_015870147.1">
    <property type="nucleotide sequence ID" value="NZ_CP169062.1"/>
</dbReference>
<dbReference type="SMR" id="C5B9F3"/>
<dbReference type="STRING" id="67780.B6E78_14295"/>
<dbReference type="GeneID" id="69537794"/>
<dbReference type="KEGG" id="eic:NT01EI_0733"/>
<dbReference type="PATRIC" id="fig|634503.3.peg.661"/>
<dbReference type="HOGENOM" id="CLU_023982_0_0_6"/>
<dbReference type="OrthoDB" id="9805475at2"/>
<dbReference type="UniPathway" id="UPA00219"/>
<dbReference type="Proteomes" id="UP000001485">
    <property type="component" value="Chromosome"/>
</dbReference>
<dbReference type="GO" id="GO:0005886">
    <property type="term" value="C:plasma membrane"/>
    <property type="evidence" value="ECO:0007669"/>
    <property type="project" value="UniProtKB-SubCell"/>
</dbReference>
<dbReference type="GO" id="GO:0046872">
    <property type="term" value="F:metal ion binding"/>
    <property type="evidence" value="ECO:0007669"/>
    <property type="project" value="UniProtKB-KW"/>
</dbReference>
<dbReference type="GO" id="GO:0008963">
    <property type="term" value="F:phospho-N-acetylmuramoyl-pentapeptide-transferase activity"/>
    <property type="evidence" value="ECO:0007669"/>
    <property type="project" value="UniProtKB-UniRule"/>
</dbReference>
<dbReference type="GO" id="GO:0051992">
    <property type="term" value="F:UDP-N-acetylmuramoyl-L-alanyl-D-glutamyl-meso-2,6-diaminopimelyl-D-alanyl-D-alanine:undecaprenyl-phosphate transferase activity"/>
    <property type="evidence" value="ECO:0007669"/>
    <property type="project" value="RHEA"/>
</dbReference>
<dbReference type="GO" id="GO:0051301">
    <property type="term" value="P:cell division"/>
    <property type="evidence" value="ECO:0007669"/>
    <property type="project" value="UniProtKB-KW"/>
</dbReference>
<dbReference type="GO" id="GO:0071555">
    <property type="term" value="P:cell wall organization"/>
    <property type="evidence" value="ECO:0007669"/>
    <property type="project" value="UniProtKB-KW"/>
</dbReference>
<dbReference type="GO" id="GO:0009252">
    <property type="term" value="P:peptidoglycan biosynthetic process"/>
    <property type="evidence" value="ECO:0007669"/>
    <property type="project" value="UniProtKB-UniRule"/>
</dbReference>
<dbReference type="GO" id="GO:0008360">
    <property type="term" value="P:regulation of cell shape"/>
    <property type="evidence" value="ECO:0007669"/>
    <property type="project" value="UniProtKB-KW"/>
</dbReference>
<dbReference type="CDD" id="cd06852">
    <property type="entry name" value="GT_MraY"/>
    <property type="match status" value="1"/>
</dbReference>
<dbReference type="HAMAP" id="MF_00038">
    <property type="entry name" value="MraY"/>
    <property type="match status" value="1"/>
</dbReference>
<dbReference type="InterPro" id="IPR000715">
    <property type="entry name" value="Glycosyl_transferase_4"/>
</dbReference>
<dbReference type="InterPro" id="IPR003524">
    <property type="entry name" value="PNAcMuramoyl-5peptid_Trfase"/>
</dbReference>
<dbReference type="InterPro" id="IPR018480">
    <property type="entry name" value="PNAcMuramoyl-5peptid_Trfase_CS"/>
</dbReference>
<dbReference type="NCBIfam" id="TIGR00445">
    <property type="entry name" value="mraY"/>
    <property type="match status" value="1"/>
</dbReference>
<dbReference type="PANTHER" id="PTHR22926">
    <property type="entry name" value="PHOSPHO-N-ACETYLMURAMOYL-PENTAPEPTIDE-TRANSFERASE"/>
    <property type="match status" value="1"/>
</dbReference>
<dbReference type="PANTHER" id="PTHR22926:SF5">
    <property type="entry name" value="PHOSPHO-N-ACETYLMURAMOYL-PENTAPEPTIDE-TRANSFERASE HOMOLOG"/>
    <property type="match status" value="1"/>
</dbReference>
<dbReference type="Pfam" id="PF00953">
    <property type="entry name" value="Glycos_transf_4"/>
    <property type="match status" value="1"/>
</dbReference>
<dbReference type="Pfam" id="PF10555">
    <property type="entry name" value="MraY_sig1"/>
    <property type="match status" value="1"/>
</dbReference>
<dbReference type="PROSITE" id="PS01347">
    <property type="entry name" value="MRAY_1"/>
    <property type="match status" value="1"/>
</dbReference>
<dbReference type="PROSITE" id="PS01348">
    <property type="entry name" value="MRAY_2"/>
    <property type="match status" value="1"/>
</dbReference>
<comment type="function">
    <text evidence="1">Catalyzes the initial step of the lipid cycle reactions in the biosynthesis of the cell wall peptidoglycan: transfers peptidoglycan precursor phospho-MurNAc-pentapeptide from UDP-MurNAc-pentapeptide onto the lipid carrier undecaprenyl phosphate, yielding undecaprenyl-pyrophosphoryl-MurNAc-pentapeptide, known as lipid I.</text>
</comment>
<comment type="catalytic activity">
    <reaction evidence="1">
        <text>UDP-N-acetyl-alpha-D-muramoyl-L-alanyl-gamma-D-glutamyl-meso-2,6-diaminopimeloyl-D-alanyl-D-alanine + di-trans,octa-cis-undecaprenyl phosphate = di-trans,octa-cis-undecaprenyl diphospho-N-acetyl-alpha-D-muramoyl-L-alanyl-D-glutamyl-meso-2,6-diaminopimeloyl-D-alanyl-D-alanine + UMP</text>
        <dbReference type="Rhea" id="RHEA:28386"/>
        <dbReference type="ChEBI" id="CHEBI:57865"/>
        <dbReference type="ChEBI" id="CHEBI:60392"/>
        <dbReference type="ChEBI" id="CHEBI:61386"/>
        <dbReference type="ChEBI" id="CHEBI:61387"/>
        <dbReference type="EC" id="2.7.8.13"/>
    </reaction>
</comment>
<comment type="cofactor">
    <cofactor evidence="1">
        <name>Mg(2+)</name>
        <dbReference type="ChEBI" id="CHEBI:18420"/>
    </cofactor>
</comment>
<comment type="pathway">
    <text evidence="1">Cell wall biogenesis; peptidoglycan biosynthesis.</text>
</comment>
<comment type="subcellular location">
    <subcellularLocation>
        <location evidence="1">Cell inner membrane</location>
        <topology evidence="1">Multi-pass membrane protein</topology>
    </subcellularLocation>
</comment>
<comment type="similarity">
    <text evidence="1">Belongs to the glycosyltransferase 4 family. MraY subfamily.</text>
</comment>
<accession>C5B9F3</accession>
<name>MRAY_EDWI9</name>
<gene>
    <name evidence="1" type="primary">mraY</name>
    <name type="ordered locus">NT01EI_0733</name>
</gene>
<sequence>MLVWLAEHLVKYFSGFNVFSYLTFRAIVSLLTALFISLWMGPRLIGWLQKLQIGQVVRNDGPESHFSKRGTPTMGGLMILTSITISVLMWAYPSNPYVWCVLFVLLGYGIVGFVDDYRKVVRKNTDGLIARWKYFWQSVIALVVAFTMYCIGKDTPATQLVVPFFKDIMPQLGLLYILLSYFVIVGTSNAVNLTDGLDGLAIMPTVFVAAGMGLVAWATGNVNFAAYLHIPYIRHAGELVIVCTAIVGAGLGFLWFNTYPAQVFMGDVGSLALGGALGTIAVLLRQEFLLVIMGGVFVMETLSVILQVGSFKLRGQRIFRMAPIHHHYELKGWPEPRVIVRFWIISLMLVLIGLATLKVR</sequence>
<organism>
    <name type="scientific">Edwardsiella ictaluri (strain 93-146)</name>
    <dbReference type="NCBI Taxonomy" id="634503"/>
    <lineage>
        <taxon>Bacteria</taxon>
        <taxon>Pseudomonadati</taxon>
        <taxon>Pseudomonadota</taxon>
        <taxon>Gammaproteobacteria</taxon>
        <taxon>Enterobacterales</taxon>
        <taxon>Hafniaceae</taxon>
        <taxon>Edwardsiella</taxon>
    </lineage>
</organism>
<feature type="chain" id="PRO_1000202067" description="Phospho-N-acetylmuramoyl-pentapeptide-transferase">
    <location>
        <begin position="1"/>
        <end position="360"/>
    </location>
</feature>
<feature type="transmembrane region" description="Helical" evidence="1">
    <location>
        <begin position="27"/>
        <end position="47"/>
    </location>
</feature>
<feature type="transmembrane region" description="Helical" evidence="1">
    <location>
        <begin position="72"/>
        <end position="92"/>
    </location>
</feature>
<feature type="transmembrane region" description="Helical" evidence="1">
    <location>
        <begin position="94"/>
        <end position="114"/>
    </location>
</feature>
<feature type="transmembrane region" description="Helical" evidence="1">
    <location>
        <begin position="132"/>
        <end position="152"/>
    </location>
</feature>
<feature type="transmembrane region" description="Helical" evidence="1">
    <location>
        <begin position="168"/>
        <end position="188"/>
    </location>
</feature>
<feature type="transmembrane region" description="Helical" evidence="1">
    <location>
        <begin position="199"/>
        <end position="219"/>
    </location>
</feature>
<feature type="transmembrane region" description="Helical" evidence="1">
    <location>
        <begin position="236"/>
        <end position="256"/>
    </location>
</feature>
<feature type="transmembrane region" description="Helical" evidence="1">
    <location>
        <begin position="263"/>
        <end position="283"/>
    </location>
</feature>
<feature type="transmembrane region" description="Helical" evidence="1">
    <location>
        <begin position="288"/>
        <end position="308"/>
    </location>
</feature>
<feature type="transmembrane region" description="Helical" evidence="1">
    <location>
        <begin position="338"/>
        <end position="358"/>
    </location>
</feature>
<keyword id="KW-0131">Cell cycle</keyword>
<keyword id="KW-0132">Cell division</keyword>
<keyword id="KW-0997">Cell inner membrane</keyword>
<keyword id="KW-1003">Cell membrane</keyword>
<keyword id="KW-0133">Cell shape</keyword>
<keyword id="KW-0961">Cell wall biogenesis/degradation</keyword>
<keyword id="KW-0460">Magnesium</keyword>
<keyword id="KW-0472">Membrane</keyword>
<keyword id="KW-0479">Metal-binding</keyword>
<keyword id="KW-0573">Peptidoglycan synthesis</keyword>
<keyword id="KW-0808">Transferase</keyword>
<keyword id="KW-0812">Transmembrane</keyword>
<keyword id="KW-1133">Transmembrane helix</keyword>
<protein>
    <recommendedName>
        <fullName evidence="1">Phospho-N-acetylmuramoyl-pentapeptide-transferase</fullName>
        <ecNumber evidence="1">2.7.8.13</ecNumber>
    </recommendedName>
    <alternativeName>
        <fullName evidence="1">UDP-MurNAc-pentapeptide phosphotransferase</fullName>
    </alternativeName>
</protein>
<proteinExistence type="inferred from homology"/>
<evidence type="ECO:0000255" key="1">
    <source>
        <dbReference type="HAMAP-Rule" id="MF_00038"/>
    </source>
</evidence>
<reference key="1">
    <citation type="submission" date="2009-03" db="EMBL/GenBank/DDBJ databases">
        <title>Complete genome sequence of Edwardsiella ictaluri 93-146.</title>
        <authorList>
            <person name="Williams M.L."/>
            <person name="Gillaspy A.F."/>
            <person name="Dyer D.W."/>
            <person name="Thune R.L."/>
            <person name="Waldbieser G.C."/>
            <person name="Schuster S.C."/>
            <person name="Gipson J."/>
            <person name="Zaitshik J."/>
            <person name="Landry C."/>
            <person name="Lawrence M.L."/>
        </authorList>
    </citation>
    <scope>NUCLEOTIDE SEQUENCE [LARGE SCALE GENOMIC DNA]</scope>
    <source>
        <strain>93-146</strain>
    </source>
</reference>